<name>MMM1_UNCRE</name>
<comment type="function">
    <text evidence="1">Component of the ERMES/MDM complex, which serves as a molecular tether to connect the endoplasmic reticulum (ER) and mitochondria. Components of this complex are involved in the control of mitochondrial shape and protein biogenesis, and function in nonvesicular lipid trafficking between the ER and mitochondria. The MDM12-MMM1 subcomplex functions in the major beta-barrel assembly pathway that is responsible for biogenesis of all outer membrane beta-barrel proteins, and acts in a late step after the SAM complex. The MDM10-MDM12-MMM1 subcomplex further acts in the TOM40-specific pathway after the action of the MDM12-MMM1 complex. Essential for establishing and maintaining the structure of mitochondria and maintenance of mtDNA nucleoids.</text>
</comment>
<comment type="subunit">
    <text evidence="1">Homodimer. Component of the ER-mitochondria encounter structure (ERMES) or MDM complex, composed of MMM1, MDM10, MDM12 and MDM34. A MMM1 homodimer associates with one molecule of MDM12 on each side in a pairwise head-to-tail manner, and the SMP-LTD domains of MMM1 and MDM12 generate a continuous hydrophobic tunnel for phospholipid trafficking.</text>
</comment>
<comment type="subcellular location">
    <subcellularLocation>
        <location evidence="1">Endoplasmic reticulum membrane</location>
        <topology evidence="1">Single-pass type I membrane protein</topology>
    </subcellularLocation>
    <text evidence="1">The ERMES/MDM complex localizes to a few discrete foci (around 10 per single cell), that represent mitochondria-endoplasmic reticulum junctions. These foci are often found next to mtDNA nucleoids.</text>
</comment>
<comment type="domain">
    <text evidence="1">The SMP-LTD domain is a barrel-like domain that can bind various types of glycerophospholipids in its interior and mediate their transfer between two adjacent bilayers.</text>
</comment>
<comment type="similarity">
    <text evidence="1">Belongs to the MMM1 family.</text>
</comment>
<accession>C4JP24</accession>
<dbReference type="EMBL" id="CH476616">
    <property type="protein sequence ID" value="EEP78238.1"/>
    <property type="molecule type" value="Genomic_DNA"/>
</dbReference>
<dbReference type="RefSeq" id="XP_002543567.1">
    <property type="nucleotide sequence ID" value="XM_002543521.1"/>
</dbReference>
<dbReference type="SMR" id="C4JP24"/>
<dbReference type="FunCoup" id="C4JP24">
    <property type="interactions" value="65"/>
</dbReference>
<dbReference type="STRING" id="336963.C4JP24"/>
<dbReference type="GeneID" id="8439430"/>
<dbReference type="KEGG" id="ure:UREG_03083"/>
<dbReference type="VEuPathDB" id="FungiDB:UREG_03083"/>
<dbReference type="eggNOG" id="ENOG502QUUW">
    <property type="taxonomic scope" value="Eukaryota"/>
</dbReference>
<dbReference type="HOGENOM" id="CLU_032730_1_0_1"/>
<dbReference type="InParanoid" id="C4JP24"/>
<dbReference type="OMA" id="WSFTQGL"/>
<dbReference type="OrthoDB" id="5376138at2759"/>
<dbReference type="Proteomes" id="UP000002058">
    <property type="component" value="Unassembled WGS sequence"/>
</dbReference>
<dbReference type="GO" id="GO:0005789">
    <property type="term" value="C:endoplasmic reticulum membrane"/>
    <property type="evidence" value="ECO:0007669"/>
    <property type="project" value="UniProtKB-SubCell"/>
</dbReference>
<dbReference type="GO" id="GO:0032865">
    <property type="term" value="C:ERMES complex"/>
    <property type="evidence" value="ECO:0007669"/>
    <property type="project" value="UniProtKB-UniRule"/>
</dbReference>
<dbReference type="GO" id="GO:0008289">
    <property type="term" value="F:lipid binding"/>
    <property type="evidence" value="ECO:0007669"/>
    <property type="project" value="UniProtKB-KW"/>
</dbReference>
<dbReference type="GO" id="GO:0000002">
    <property type="term" value="P:mitochondrial genome maintenance"/>
    <property type="evidence" value="ECO:0007669"/>
    <property type="project" value="UniProtKB-UniRule"/>
</dbReference>
<dbReference type="GO" id="GO:1990456">
    <property type="term" value="P:mitochondrion-endoplasmic reticulum membrane tethering"/>
    <property type="evidence" value="ECO:0007669"/>
    <property type="project" value="TreeGrafter"/>
</dbReference>
<dbReference type="GO" id="GO:0015914">
    <property type="term" value="P:phospholipid transport"/>
    <property type="evidence" value="ECO:0007669"/>
    <property type="project" value="TreeGrafter"/>
</dbReference>
<dbReference type="GO" id="GO:0045040">
    <property type="term" value="P:protein insertion into mitochondrial outer membrane"/>
    <property type="evidence" value="ECO:0007669"/>
    <property type="project" value="UniProtKB-UniRule"/>
</dbReference>
<dbReference type="CDD" id="cd21671">
    <property type="entry name" value="SMP_Mmm1"/>
    <property type="match status" value="1"/>
</dbReference>
<dbReference type="HAMAP" id="MF_03103">
    <property type="entry name" value="Mmm1"/>
    <property type="match status" value="1"/>
</dbReference>
<dbReference type="InterPro" id="IPR027537">
    <property type="entry name" value="Mmm1"/>
</dbReference>
<dbReference type="InterPro" id="IPR019411">
    <property type="entry name" value="MMM1_dom"/>
</dbReference>
<dbReference type="InterPro" id="IPR031468">
    <property type="entry name" value="SMP_LBD"/>
</dbReference>
<dbReference type="PANTHER" id="PTHR13466:SF0">
    <property type="entry name" value="SMP-LTD DOMAIN-CONTAINING PROTEIN"/>
    <property type="match status" value="1"/>
</dbReference>
<dbReference type="PANTHER" id="PTHR13466">
    <property type="entry name" value="TEX2 PROTEIN-RELATED"/>
    <property type="match status" value="1"/>
</dbReference>
<dbReference type="Pfam" id="PF10296">
    <property type="entry name" value="MMM1"/>
    <property type="match status" value="1"/>
</dbReference>
<dbReference type="PROSITE" id="PS51847">
    <property type="entry name" value="SMP"/>
    <property type="match status" value="1"/>
</dbReference>
<protein>
    <recommendedName>
        <fullName evidence="1">Maintenance of mitochondrial morphology protein 1</fullName>
    </recommendedName>
</protein>
<evidence type="ECO:0000255" key="1">
    <source>
        <dbReference type="HAMAP-Rule" id="MF_03103"/>
    </source>
</evidence>
<evidence type="ECO:0000256" key="2">
    <source>
        <dbReference type="SAM" id="MobiDB-lite"/>
    </source>
</evidence>
<organism>
    <name type="scientific">Uncinocarpus reesii (strain UAMH 1704)</name>
    <dbReference type="NCBI Taxonomy" id="336963"/>
    <lineage>
        <taxon>Eukaryota</taxon>
        <taxon>Fungi</taxon>
        <taxon>Dikarya</taxon>
        <taxon>Ascomycota</taxon>
        <taxon>Pezizomycotina</taxon>
        <taxon>Eurotiomycetes</taxon>
        <taxon>Eurotiomycetidae</taxon>
        <taxon>Onygenales</taxon>
        <taxon>Onygenaceae</taxon>
        <taxon>Uncinocarpus</taxon>
    </lineage>
</organism>
<sequence length="497" mass="54209">MSSVLNPSSPHSWDLCCSSSSNRSYHRPTHPIVGLLVGQLSVVLLIGAFIKFFIFGEAPPSPSRSQTHRTSQHKRSYSIHGARDLSPRTLKEKPSSNVLRPVPSSSTNTRSILRKTYYSANPTNFPSKHGRHRPHHSTHQPESLDWFNVLIAQTIAQYRQTAYILKDSPTASILESLATTLNNPEKKPSFIDEITVTDISLGEEFPIFSNCRVIAIDDPNSDGGRLQALMDVDLSDDNLSLAIETNLVLNYPKPYSAILPVALSVSVVRFSGTLCISFVPGTTESSTNLTPTSSNIDTNLRSNELRGKTAPQESSTTDEGSQGGATSTTGIPKTSLAFSFLPDYRLDLSVRSLIGSRSRLQDVPKVAQLVEARVHAWFEERVVEPRVQVVALPGIWPRMGRTGVRGQEEQPDVSSSDAAGVSGAKVSMLGSRDTGAEMLHAAREVDAEGLRYRRNPPPGDKGSSSKYAQQNQSSRERGRADDPFRIPGSLPDAVPIT</sequence>
<feature type="chain" id="PRO_0000384257" description="Maintenance of mitochondrial morphology protein 1">
    <location>
        <begin position="1"/>
        <end position="497"/>
    </location>
</feature>
<feature type="topological domain" description="Lumenal" evidence="1">
    <location>
        <begin position="1"/>
        <end position="28"/>
    </location>
</feature>
<feature type="transmembrane region" description="Helical" evidence="1">
    <location>
        <begin position="29"/>
        <end position="55"/>
    </location>
</feature>
<feature type="topological domain" description="Cytoplasmic" evidence="1">
    <location>
        <begin position="56"/>
        <end position="497"/>
    </location>
</feature>
<feature type="domain" description="SMP-LTD" evidence="1">
    <location>
        <begin position="140"/>
        <end position="393"/>
    </location>
</feature>
<feature type="region of interest" description="Disordered" evidence="2">
    <location>
        <begin position="60"/>
        <end position="107"/>
    </location>
</feature>
<feature type="region of interest" description="Disordered" evidence="2">
    <location>
        <begin position="284"/>
        <end position="330"/>
    </location>
</feature>
<feature type="region of interest" description="Disordered" evidence="2">
    <location>
        <begin position="402"/>
        <end position="421"/>
    </location>
</feature>
<feature type="region of interest" description="Disordered" evidence="2">
    <location>
        <begin position="437"/>
        <end position="497"/>
    </location>
</feature>
<feature type="compositionally biased region" description="Basic residues" evidence="2">
    <location>
        <begin position="66"/>
        <end position="77"/>
    </location>
</feature>
<feature type="compositionally biased region" description="Basic and acidic residues" evidence="2">
    <location>
        <begin position="81"/>
        <end position="94"/>
    </location>
</feature>
<feature type="compositionally biased region" description="Polar residues" evidence="2">
    <location>
        <begin position="95"/>
        <end position="107"/>
    </location>
</feature>
<feature type="compositionally biased region" description="Polar residues" evidence="2">
    <location>
        <begin position="284"/>
        <end position="302"/>
    </location>
</feature>
<feature type="compositionally biased region" description="Polar residues" evidence="2">
    <location>
        <begin position="311"/>
        <end position="330"/>
    </location>
</feature>
<feature type="compositionally biased region" description="Low complexity" evidence="2">
    <location>
        <begin position="412"/>
        <end position="421"/>
    </location>
</feature>
<feature type="compositionally biased region" description="Basic and acidic residues" evidence="2">
    <location>
        <begin position="440"/>
        <end position="451"/>
    </location>
</feature>
<feature type="compositionally biased region" description="Polar residues" evidence="2">
    <location>
        <begin position="462"/>
        <end position="473"/>
    </location>
</feature>
<feature type="compositionally biased region" description="Basic and acidic residues" evidence="2">
    <location>
        <begin position="474"/>
        <end position="484"/>
    </location>
</feature>
<gene>
    <name evidence="1" type="primary">MMM1</name>
    <name type="ORF">UREG_03083</name>
</gene>
<reference key="1">
    <citation type="journal article" date="2009" name="Genome Res.">
        <title>Comparative genomic analyses of the human fungal pathogens Coccidioides and their relatives.</title>
        <authorList>
            <person name="Sharpton T.J."/>
            <person name="Stajich J.E."/>
            <person name="Rounsley S.D."/>
            <person name="Gardner M.J."/>
            <person name="Wortman J.R."/>
            <person name="Jordar V.S."/>
            <person name="Maiti R."/>
            <person name="Kodira C.D."/>
            <person name="Neafsey D.E."/>
            <person name="Zeng Q."/>
            <person name="Hung C.-Y."/>
            <person name="McMahan C."/>
            <person name="Muszewska A."/>
            <person name="Grynberg M."/>
            <person name="Mandel M.A."/>
            <person name="Kellner E.M."/>
            <person name="Barker B.M."/>
            <person name="Galgiani J.N."/>
            <person name="Orbach M.J."/>
            <person name="Kirkland T.N."/>
            <person name="Cole G.T."/>
            <person name="Henn M.R."/>
            <person name="Birren B.W."/>
            <person name="Taylor J.W."/>
        </authorList>
    </citation>
    <scope>NUCLEOTIDE SEQUENCE [LARGE SCALE GENOMIC DNA]</scope>
    <source>
        <strain>UAMH 1704</strain>
    </source>
</reference>
<proteinExistence type="inferred from homology"/>
<keyword id="KW-0256">Endoplasmic reticulum</keyword>
<keyword id="KW-0445">Lipid transport</keyword>
<keyword id="KW-0446">Lipid-binding</keyword>
<keyword id="KW-0472">Membrane</keyword>
<keyword id="KW-1185">Reference proteome</keyword>
<keyword id="KW-0812">Transmembrane</keyword>
<keyword id="KW-1133">Transmembrane helix</keyword>
<keyword id="KW-0813">Transport</keyword>